<keyword id="KW-0687">Ribonucleoprotein</keyword>
<keyword id="KW-0689">Ribosomal protein</keyword>
<comment type="similarity">
    <text evidence="1">Belongs to the bacterial ribosomal protein bL36 family.</text>
</comment>
<comment type="sequence caution" evidence="2">
    <conflict type="erroneous initiation">
        <sequence resource="EMBL-CDS" id="ABR75888"/>
    </conflict>
</comment>
<accession>A6T5L7</accession>
<organism>
    <name type="scientific">Klebsiella pneumoniae subsp. pneumoniae (strain ATCC 700721 / MGH 78578)</name>
    <dbReference type="NCBI Taxonomy" id="272620"/>
    <lineage>
        <taxon>Bacteria</taxon>
        <taxon>Pseudomonadati</taxon>
        <taxon>Pseudomonadota</taxon>
        <taxon>Gammaproteobacteria</taxon>
        <taxon>Enterobacterales</taxon>
        <taxon>Enterobacteriaceae</taxon>
        <taxon>Klebsiella/Raoultella group</taxon>
        <taxon>Klebsiella</taxon>
        <taxon>Klebsiella pneumoniae complex</taxon>
    </lineage>
</organism>
<reference key="1">
    <citation type="submission" date="2006-09" db="EMBL/GenBank/DDBJ databases">
        <authorList>
            <consortium name="The Klebsiella pneumonia Genome Sequencing Project"/>
            <person name="McClelland M."/>
            <person name="Sanderson E.K."/>
            <person name="Spieth J."/>
            <person name="Clifton W.S."/>
            <person name="Latreille P."/>
            <person name="Sabo A."/>
            <person name="Pepin K."/>
            <person name="Bhonagiri V."/>
            <person name="Porwollik S."/>
            <person name="Ali J."/>
            <person name="Wilson R.K."/>
        </authorList>
    </citation>
    <scope>NUCLEOTIDE SEQUENCE [LARGE SCALE GENOMIC DNA]</scope>
    <source>
        <strain>ATCC 700721 / MGH 78578</strain>
    </source>
</reference>
<gene>
    <name evidence="1" type="primary">rpmJ</name>
    <name type="ordered locus">KPN78578_04270</name>
    <name type="ORF">KPN_00436</name>
</gene>
<protein>
    <recommendedName>
        <fullName evidence="1">Large ribosomal subunit protein bL36</fullName>
    </recommendedName>
    <alternativeName>
        <fullName evidence="2">50S ribosomal protein L36</fullName>
    </alternativeName>
</protein>
<evidence type="ECO:0000255" key="1">
    <source>
        <dbReference type="HAMAP-Rule" id="MF_00251"/>
    </source>
</evidence>
<evidence type="ECO:0000305" key="2"/>
<name>RL36_KLEP7</name>
<dbReference type="EMBL" id="CP000647">
    <property type="protein sequence ID" value="ABR75888.1"/>
    <property type="status" value="ALT_INIT"/>
    <property type="molecule type" value="Genomic_DNA"/>
</dbReference>
<dbReference type="SMR" id="A6T5L7"/>
<dbReference type="STRING" id="272620.KPN_00436"/>
<dbReference type="PaxDb" id="272620-KPN_00436"/>
<dbReference type="EnsemblBacteria" id="ABR75888">
    <property type="protein sequence ID" value="ABR75888"/>
    <property type="gene ID" value="KPN_00436"/>
</dbReference>
<dbReference type="KEGG" id="kpn:KPN_00436"/>
<dbReference type="HOGENOM" id="CLU_135723_3_1_6"/>
<dbReference type="Proteomes" id="UP000000265">
    <property type="component" value="Chromosome"/>
</dbReference>
<dbReference type="GO" id="GO:1990904">
    <property type="term" value="C:ribonucleoprotein complex"/>
    <property type="evidence" value="ECO:0007669"/>
    <property type="project" value="UniProtKB-KW"/>
</dbReference>
<dbReference type="GO" id="GO:0005840">
    <property type="term" value="C:ribosome"/>
    <property type="evidence" value="ECO:0007669"/>
    <property type="project" value="UniProtKB-KW"/>
</dbReference>
<dbReference type="GO" id="GO:0003735">
    <property type="term" value="F:structural constituent of ribosome"/>
    <property type="evidence" value="ECO:0007669"/>
    <property type="project" value="InterPro"/>
</dbReference>
<dbReference type="GO" id="GO:0006412">
    <property type="term" value="P:translation"/>
    <property type="evidence" value="ECO:0007669"/>
    <property type="project" value="UniProtKB-UniRule"/>
</dbReference>
<dbReference type="HAMAP" id="MF_00251">
    <property type="entry name" value="Ribosomal_bL36"/>
    <property type="match status" value="1"/>
</dbReference>
<dbReference type="InterPro" id="IPR000473">
    <property type="entry name" value="Ribosomal_bL36"/>
</dbReference>
<dbReference type="InterPro" id="IPR035977">
    <property type="entry name" value="Ribosomal_bL36_sp"/>
</dbReference>
<dbReference type="InterPro" id="IPR047621">
    <property type="entry name" value="Ribosomal_L36_bact"/>
</dbReference>
<dbReference type="NCBIfam" id="NF002021">
    <property type="entry name" value="PRK00831.1"/>
    <property type="match status" value="1"/>
</dbReference>
<dbReference type="NCBIfam" id="TIGR01022">
    <property type="entry name" value="rpmJ_bact"/>
    <property type="match status" value="1"/>
</dbReference>
<dbReference type="PANTHER" id="PTHR47781">
    <property type="entry name" value="50S RIBOSOMAL PROTEIN L36 2"/>
    <property type="match status" value="1"/>
</dbReference>
<dbReference type="PANTHER" id="PTHR47781:SF1">
    <property type="entry name" value="LARGE RIBOSOMAL SUBUNIT PROTEIN BL36B"/>
    <property type="match status" value="1"/>
</dbReference>
<dbReference type="Pfam" id="PF00444">
    <property type="entry name" value="Ribosomal_L36"/>
    <property type="match status" value="1"/>
</dbReference>
<dbReference type="SUPFAM" id="SSF57840">
    <property type="entry name" value="Ribosomal protein L36"/>
    <property type="match status" value="1"/>
</dbReference>
<dbReference type="PROSITE" id="PS00828">
    <property type="entry name" value="RIBOSOMAL_L36"/>
    <property type="match status" value="1"/>
</dbReference>
<proteinExistence type="inferred from homology"/>
<sequence length="46" mass="5466">MQVVNSLRSAKQRHPDCQLVKRKGRLYVICKSNPRFKAVQGRKKRR</sequence>
<feature type="chain" id="PRO_0000344685" description="Large ribosomal subunit protein bL36">
    <location>
        <begin position="1"/>
        <end position="46"/>
    </location>
</feature>